<feature type="peptide" id="PRO_0000421478" description="Extended FMRFamide-1" evidence="3">
    <location>
        <begin position="1"/>
        <end position="7"/>
    </location>
</feature>
<feature type="modified residue" description="Leucine amide" evidence="3">
    <location>
        <position position="7"/>
    </location>
</feature>
<feature type="unsure residue" description="L or I" evidence="3">
    <location>
        <position position="5"/>
    </location>
</feature>
<feature type="unsure residue" description="L or I" evidence="3">
    <location>
        <position position="7"/>
    </location>
</feature>
<sequence>AQSFLRL</sequence>
<protein>
    <recommendedName>
        <fullName evidence="4">Extended FMRFamide-1</fullName>
        <shortName evidence="4">FMRFa-1</shortName>
    </recommendedName>
</protein>
<accession>B3A062</accession>
<organism>
    <name type="scientific">Karoophasma biedouwense</name>
    <name type="common">Gladiator</name>
    <name type="synonym">Heel-walker</name>
    <dbReference type="NCBI Taxonomy" id="253133"/>
    <lineage>
        <taxon>Eukaryota</taxon>
        <taxon>Metazoa</taxon>
        <taxon>Ecdysozoa</taxon>
        <taxon>Arthropoda</taxon>
        <taxon>Hexapoda</taxon>
        <taxon>Insecta</taxon>
        <taxon>Pterygota</taxon>
        <taxon>Neoptera</taxon>
        <taxon>Polyneoptera</taxon>
        <taxon>Mantophasmatodea</taxon>
        <taxon>Austrophasmatidae</taxon>
        <taxon>Karoophasma</taxon>
    </lineage>
</organism>
<proteinExistence type="evidence at protein level"/>
<name>FAR1_KARBI</name>
<keyword id="KW-0027">Amidation</keyword>
<keyword id="KW-0903">Direct protein sequencing</keyword>
<keyword id="KW-0527">Neuropeptide</keyword>
<keyword id="KW-0964">Secreted</keyword>
<dbReference type="GO" id="GO:0005576">
    <property type="term" value="C:extracellular region"/>
    <property type="evidence" value="ECO:0007669"/>
    <property type="project" value="UniProtKB-SubCell"/>
</dbReference>
<dbReference type="GO" id="GO:0007218">
    <property type="term" value="P:neuropeptide signaling pathway"/>
    <property type="evidence" value="ECO:0007669"/>
    <property type="project" value="UniProtKB-KW"/>
</dbReference>
<evidence type="ECO:0000250" key="1">
    <source>
        <dbReference type="UniProtKB" id="P34405"/>
    </source>
</evidence>
<evidence type="ECO:0000255" key="2"/>
<evidence type="ECO:0000269" key="3">
    <source>
    </source>
</evidence>
<evidence type="ECO:0000303" key="4">
    <source>
    </source>
</evidence>
<evidence type="ECO:0000305" key="5"/>
<evidence type="ECO:0000305" key="6">
    <source>
    </source>
</evidence>
<comment type="function">
    <text evidence="1">FMRFamides and FMRFamide-like peptides are neuropeptides.</text>
</comment>
<comment type="subcellular location">
    <subcellularLocation>
        <location evidence="6">Secreted</location>
    </subcellularLocation>
</comment>
<comment type="similarity">
    <text evidence="2">Belongs to the FARP (FMRF amide related peptide) family.</text>
</comment>
<reference evidence="5" key="1">
    <citation type="journal article" date="2012" name="Syst. Biol.">
        <title>Peptidomics-based phylogeny and biogeography of Mantophasmatodea (Hexapoda).</title>
        <authorList>
            <person name="Predel R."/>
            <person name="Neupert S."/>
            <person name="Huetteroth W."/>
            <person name="Kahnt J."/>
            <person name="Waidelich D."/>
            <person name="Roth S."/>
        </authorList>
    </citation>
    <scope>PROTEIN SEQUENCE</scope>
    <scope>AMIDATION AT LEU-7</scope>
    <source>
        <tissue evidence="3">Thoracic perisympathetic organs</tissue>
    </source>
</reference>